<dbReference type="EC" id="2.7.4.8" evidence="1"/>
<dbReference type="EMBL" id="AE014184">
    <property type="protein sequence ID" value="AAO44460.1"/>
    <property type="status" value="ALT_INIT"/>
    <property type="molecule type" value="Genomic_DNA"/>
</dbReference>
<dbReference type="SMR" id="Q83GE3"/>
<dbReference type="STRING" id="203267.TWT_363"/>
<dbReference type="KEGG" id="twh:TWT_363"/>
<dbReference type="eggNOG" id="COG0194">
    <property type="taxonomic scope" value="Bacteria"/>
</dbReference>
<dbReference type="HOGENOM" id="CLU_001715_0_1_11"/>
<dbReference type="OrthoDB" id="9808150at2"/>
<dbReference type="Proteomes" id="UP000002200">
    <property type="component" value="Chromosome"/>
</dbReference>
<dbReference type="GO" id="GO:0005829">
    <property type="term" value="C:cytosol"/>
    <property type="evidence" value="ECO:0007669"/>
    <property type="project" value="TreeGrafter"/>
</dbReference>
<dbReference type="GO" id="GO:0005524">
    <property type="term" value="F:ATP binding"/>
    <property type="evidence" value="ECO:0007669"/>
    <property type="project" value="UniProtKB-UniRule"/>
</dbReference>
<dbReference type="GO" id="GO:0004385">
    <property type="term" value="F:guanylate kinase activity"/>
    <property type="evidence" value="ECO:0007669"/>
    <property type="project" value="UniProtKB-UniRule"/>
</dbReference>
<dbReference type="CDD" id="cd00071">
    <property type="entry name" value="GMPK"/>
    <property type="match status" value="1"/>
</dbReference>
<dbReference type="FunFam" id="3.30.63.10:FF:000002">
    <property type="entry name" value="Guanylate kinase 1"/>
    <property type="match status" value="1"/>
</dbReference>
<dbReference type="Gene3D" id="3.30.63.10">
    <property type="entry name" value="Guanylate Kinase phosphate binding domain"/>
    <property type="match status" value="1"/>
</dbReference>
<dbReference type="Gene3D" id="3.40.50.300">
    <property type="entry name" value="P-loop containing nucleotide triphosphate hydrolases"/>
    <property type="match status" value="1"/>
</dbReference>
<dbReference type="HAMAP" id="MF_00328">
    <property type="entry name" value="Guanylate_kinase"/>
    <property type="match status" value="1"/>
</dbReference>
<dbReference type="InterPro" id="IPR008145">
    <property type="entry name" value="GK/Ca_channel_bsu"/>
</dbReference>
<dbReference type="InterPro" id="IPR008144">
    <property type="entry name" value="Guanylate_kin-like_dom"/>
</dbReference>
<dbReference type="InterPro" id="IPR017665">
    <property type="entry name" value="Guanylate_kinase"/>
</dbReference>
<dbReference type="InterPro" id="IPR020590">
    <property type="entry name" value="Guanylate_kinase_CS"/>
</dbReference>
<dbReference type="InterPro" id="IPR027417">
    <property type="entry name" value="P-loop_NTPase"/>
</dbReference>
<dbReference type="NCBIfam" id="TIGR03263">
    <property type="entry name" value="guanyl_kin"/>
    <property type="match status" value="1"/>
</dbReference>
<dbReference type="PANTHER" id="PTHR23117:SF13">
    <property type="entry name" value="GUANYLATE KINASE"/>
    <property type="match status" value="1"/>
</dbReference>
<dbReference type="PANTHER" id="PTHR23117">
    <property type="entry name" value="GUANYLATE KINASE-RELATED"/>
    <property type="match status" value="1"/>
</dbReference>
<dbReference type="Pfam" id="PF00625">
    <property type="entry name" value="Guanylate_kin"/>
    <property type="match status" value="1"/>
</dbReference>
<dbReference type="SMART" id="SM00072">
    <property type="entry name" value="GuKc"/>
    <property type="match status" value="1"/>
</dbReference>
<dbReference type="SUPFAM" id="SSF52540">
    <property type="entry name" value="P-loop containing nucleoside triphosphate hydrolases"/>
    <property type="match status" value="1"/>
</dbReference>
<dbReference type="PROSITE" id="PS00856">
    <property type="entry name" value="GUANYLATE_KINASE_1"/>
    <property type="match status" value="1"/>
</dbReference>
<dbReference type="PROSITE" id="PS50052">
    <property type="entry name" value="GUANYLATE_KINASE_2"/>
    <property type="match status" value="1"/>
</dbReference>
<keyword id="KW-0067">ATP-binding</keyword>
<keyword id="KW-0963">Cytoplasm</keyword>
<keyword id="KW-0418">Kinase</keyword>
<keyword id="KW-0547">Nucleotide-binding</keyword>
<keyword id="KW-1185">Reference proteome</keyword>
<keyword id="KW-0808">Transferase</keyword>
<feature type="chain" id="PRO_0000170634" description="Guanylate kinase">
    <location>
        <begin position="1"/>
        <end position="193"/>
    </location>
</feature>
<feature type="domain" description="Guanylate kinase-like" evidence="1">
    <location>
        <begin position="12"/>
        <end position="191"/>
    </location>
</feature>
<feature type="binding site" evidence="1">
    <location>
        <begin position="19"/>
        <end position="26"/>
    </location>
    <ligand>
        <name>ATP</name>
        <dbReference type="ChEBI" id="CHEBI:30616"/>
    </ligand>
</feature>
<sequence>MQLFDLWTDLLDLLTIVAGPTAVGKGTVISHLRKCHPQVKVSISATTREPRDSERDGIDYYFVTDEVFDCMVRSGQMLEWATVHGLHKYGTPKEEVERLLHTGQPVILEIDLQGMRKVRKILPAVRTVILLPPAWDDLICRIKRRGSESQDEIDARLATAKKELEAIGEFDYKIVNADVEIAANELWLAMNRV</sequence>
<comment type="function">
    <text evidence="1">Essential for recycling GMP and indirectly, cGMP.</text>
</comment>
<comment type="catalytic activity">
    <reaction evidence="1">
        <text>GMP + ATP = GDP + ADP</text>
        <dbReference type="Rhea" id="RHEA:20780"/>
        <dbReference type="ChEBI" id="CHEBI:30616"/>
        <dbReference type="ChEBI" id="CHEBI:58115"/>
        <dbReference type="ChEBI" id="CHEBI:58189"/>
        <dbReference type="ChEBI" id="CHEBI:456216"/>
        <dbReference type="EC" id="2.7.4.8"/>
    </reaction>
</comment>
<comment type="subcellular location">
    <subcellularLocation>
        <location evidence="1">Cytoplasm</location>
    </subcellularLocation>
</comment>
<comment type="similarity">
    <text evidence="1">Belongs to the guanylate kinase family.</text>
</comment>
<comment type="sequence caution" evidence="2">
    <conflict type="erroneous initiation">
        <sequence resource="EMBL-CDS" id="AAO44460"/>
    </conflict>
</comment>
<accession>Q83GE3</accession>
<protein>
    <recommendedName>
        <fullName evidence="1">Guanylate kinase</fullName>
        <ecNumber evidence="1">2.7.4.8</ecNumber>
    </recommendedName>
    <alternativeName>
        <fullName evidence="1">GMP kinase</fullName>
    </alternativeName>
</protein>
<proteinExistence type="inferred from homology"/>
<evidence type="ECO:0000255" key="1">
    <source>
        <dbReference type="HAMAP-Rule" id="MF_00328"/>
    </source>
</evidence>
<evidence type="ECO:0000305" key="2"/>
<reference key="1">
    <citation type="journal article" date="2003" name="Genome Res.">
        <title>Tropheryma whipplei twist: a human pathogenic Actinobacteria with a reduced genome.</title>
        <authorList>
            <person name="Raoult D."/>
            <person name="Ogata H."/>
            <person name="Audic S."/>
            <person name="Robert C."/>
            <person name="Suhre K."/>
            <person name="Drancourt M."/>
            <person name="Claverie J.-M."/>
        </authorList>
    </citation>
    <scope>NUCLEOTIDE SEQUENCE [LARGE SCALE GENOMIC DNA]</scope>
    <source>
        <strain>Twist</strain>
    </source>
</reference>
<name>KGUA_TROWT</name>
<organism>
    <name type="scientific">Tropheryma whipplei (strain Twist)</name>
    <name type="common">Whipple's bacillus</name>
    <dbReference type="NCBI Taxonomy" id="203267"/>
    <lineage>
        <taxon>Bacteria</taxon>
        <taxon>Bacillati</taxon>
        <taxon>Actinomycetota</taxon>
        <taxon>Actinomycetes</taxon>
        <taxon>Micrococcales</taxon>
        <taxon>Tropherymataceae</taxon>
        <taxon>Tropheryma</taxon>
    </lineage>
</organism>
<gene>
    <name evidence="1" type="primary">gmk</name>
    <name type="ordered locus">TWT_363</name>
</gene>